<sequence length="80" mass="9105">MQTAYWVMVMMMVWITAPLSEGGKLNDVIRGLVPDDVTPQLILRSLISRRPSDSVVRSTVHICYWKVCPPPPWRRPNGKG</sequence>
<accession>P0DW21</accession>
<feature type="signal peptide" evidence="2">
    <location>
        <begin position="1"/>
        <end position="22"/>
    </location>
</feature>
<feature type="propeptide" id="PRO_0000456123" evidence="5">
    <location>
        <begin position="23"/>
        <end position="57"/>
    </location>
</feature>
<feature type="peptide" id="PRO_0000456124" description="Consomatin Mrc1" evidence="5">
    <location>
        <begin position="58"/>
        <end position="73"/>
    </location>
</feature>
<feature type="propeptide" id="PRO_0000456125" evidence="5">
    <location>
        <begin position="74"/>
        <end position="80"/>
    </location>
</feature>
<feature type="modified residue" description="D-tryptophan" evidence="1 4">
    <location>
        <position position="65"/>
    </location>
</feature>
<feature type="modified residue" description="4-hydroxyproline" evidence="4">
    <location>
        <position position="69"/>
    </location>
</feature>
<feature type="modified residue" description="4-hydroxyproline" evidence="4">
    <location>
        <position position="70"/>
    </location>
</feature>
<feature type="modified residue" description="4-hydroxyproline" evidence="4">
    <location>
        <position position="71"/>
    </location>
</feature>
<feature type="modified residue" description="4-hydroxyproline" evidence="4">
    <location>
        <position position="72"/>
    </location>
</feature>
<feature type="disulfide bond" evidence="1">
    <location>
        <begin position="63"/>
        <end position="68"/>
    </location>
</feature>
<name>CSST1_CONMK</name>
<dbReference type="GO" id="GO:0005576">
    <property type="term" value="C:extracellular region"/>
    <property type="evidence" value="ECO:0007669"/>
    <property type="project" value="UniProtKB-SubCell"/>
</dbReference>
<dbReference type="GO" id="GO:0090729">
    <property type="term" value="F:toxin activity"/>
    <property type="evidence" value="ECO:0007669"/>
    <property type="project" value="UniProtKB-KW"/>
</dbReference>
<organism>
    <name type="scientific">Conus mercator</name>
    <name type="common">Trader cone</name>
    <name type="synonym">Varioconus mercator</name>
    <dbReference type="NCBI Taxonomy" id="289040"/>
    <lineage>
        <taxon>Eukaryota</taxon>
        <taxon>Metazoa</taxon>
        <taxon>Spiralia</taxon>
        <taxon>Lophotrochozoa</taxon>
        <taxon>Mollusca</taxon>
        <taxon>Gastropoda</taxon>
        <taxon>Caenogastropoda</taxon>
        <taxon>Neogastropoda</taxon>
        <taxon>Conoidea</taxon>
        <taxon>Conidae</taxon>
        <taxon>Varioconus</taxon>
    </lineage>
</organism>
<comment type="function">
    <text evidence="1">Moderately activates human somatostatin receptors (SSTR) with a preferential activation of SSTR1 and SSTR4. In vivo, does not cause behavioral changes in mice within a few minutes of intracranial injection, but causes a progressive loss of movement thereafter. Four to five hours after injection, mice recover, even with the highest dose tested. Shows antinociception and antihyperalgesia activities in two mouse models of acute pain, most probably by acting outside the central nervous system.</text>
</comment>
<comment type="subcellular location">
    <subcellularLocation>
        <location evidence="5">Secreted</location>
    </subcellularLocation>
</comment>
<comment type="tissue specificity">
    <text evidence="5">Expressed by the venom duct.</text>
</comment>
<comment type="domain">
    <text evidence="4">The cysteine framework is C-C.</text>
</comment>
<comment type="miscellaneous">
    <text evidence="1">This peptide is an evolutionarily optimized stable analog of somatostatin. In addition, it adopts nearly identical conformations as in the somatostatin drug analog Octreotide. As this drug, it contains a D-Trp at the same position, whose synthesis is a common strategy used for enhancing the metabolic stability of compounds in drug design.</text>
</comment>
<comment type="miscellaneous">
    <text evidence="1">Consomatins evolved by gene duplication of a 'Somatostatin and related peptides (SSRP)' gene expressed in the snail neuroendocrine system.</text>
</comment>
<comment type="miscellaneous">
    <text evidence="1">Negative results: does not activate any of the other 313 GPCRs tested. Shows little or no activating activity at the SSTR2, SSTR3 and SSTR5.</text>
</comment>
<comment type="similarity">
    <text evidence="4">Belongs to the conotoxin C superfamily. Consomatin family.</text>
</comment>
<reference key="1">
    <citation type="journal article" date="2022" name="Sci. Adv.">
        <title>Somatostatin venom analogs evolved by fish-hunting cone snails: from prey capture behavior to identifying drug leads.</title>
        <authorList>
            <person name="Ramiro I.B.L."/>
            <person name="Bjoern-Yoshimoto W.E."/>
            <person name="Imperial J.S."/>
            <person name="Gajewiak J."/>
            <person name="Salcedo P.F."/>
            <person name="Watkins M."/>
            <person name="Taylor D."/>
            <person name="Resager W."/>
            <person name="Ueberheide B."/>
            <person name="Braeuner-Osborne H."/>
            <person name="Whitby F.G."/>
            <person name="Hill C.P."/>
            <person name="Martin L.F."/>
            <person name="Patwardhan A."/>
            <person name="Concepcion G.P."/>
            <person name="Olivera B.M."/>
            <person name="Safavi-Hemami H."/>
        </authorList>
    </citation>
    <scope>NUCLEOTIDE SEQUENCE [MRNA]</scope>
    <source>
        <tissue>Venom duct</tissue>
    </source>
</reference>
<proteinExistence type="inferred from homology"/>
<evidence type="ECO:0000250" key="1">
    <source>
        <dbReference type="UniProtKB" id="P0DQT5"/>
    </source>
</evidence>
<evidence type="ECO:0000255" key="2"/>
<evidence type="ECO:0000303" key="3">
    <source>
    </source>
</evidence>
<evidence type="ECO:0000305" key="4"/>
<evidence type="ECO:0000305" key="5">
    <source>
    </source>
</evidence>
<protein>
    <recommendedName>
        <fullName evidence="3">Consomatin Mrc1</fullName>
        <shortName evidence="3">ConSST Mrc1</shortName>
    </recommendedName>
    <alternativeName>
        <fullName evidence="1">Somatostatin-related peptide</fullName>
        <shortName evidence="1">SSRP</shortName>
    </alternativeName>
</protein>
<keyword id="KW-0165">Cleavage on pair of basic residues</keyword>
<keyword id="KW-0208">D-amino acid</keyword>
<keyword id="KW-1015">Disulfide bond</keyword>
<keyword id="KW-1213">G-protein coupled receptor impairing toxin</keyword>
<keyword id="KW-0379">Hydroxylation</keyword>
<keyword id="KW-0964">Secreted</keyword>
<keyword id="KW-0732">Signal</keyword>
<keyword id="KW-0800">Toxin</keyword>